<accession>A1UIP9</accession>
<feature type="chain" id="PRO_1000012142" description="DNA repair protein RecO">
    <location>
        <begin position="1"/>
        <end position="276"/>
    </location>
</feature>
<dbReference type="EMBL" id="CP000518">
    <property type="protein sequence ID" value="ABL92707.1"/>
    <property type="molecule type" value="Genomic_DNA"/>
</dbReference>
<dbReference type="SMR" id="A1UIP9"/>
<dbReference type="STRING" id="189918.Mkms_3513"/>
<dbReference type="KEGG" id="mkm:Mkms_3513"/>
<dbReference type="HOGENOM" id="CLU_066632_1_1_11"/>
<dbReference type="OrthoDB" id="9812244at2"/>
<dbReference type="GO" id="GO:0043590">
    <property type="term" value="C:bacterial nucleoid"/>
    <property type="evidence" value="ECO:0007669"/>
    <property type="project" value="TreeGrafter"/>
</dbReference>
<dbReference type="GO" id="GO:0006310">
    <property type="term" value="P:DNA recombination"/>
    <property type="evidence" value="ECO:0007669"/>
    <property type="project" value="UniProtKB-UniRule"/>
</dbReference>
<dbReference type="GO" id="GO:0006302">
    <property type="term" value="P:double-strand break repair"/>
    <property type="evidence" value="ECO:0007669"/>
    <property type="project" value="TreeGrafter"/>
</dbReference>
<dbReference type="FunFam" id="2.40.50.140:FF:000176">
    <property type="entry name" value="DNA repair protein RecO"/>
    <property type="match status" value="1"/>
</dbReference>
<dbReference type="Gene3D" id="2.40.50.140">
    <property type="entry name" value="Nucleic acid-binding proteins"/>
    <property type="match status" value="1"/>
</dbReference>
<dbReference type="Gene3D" id="1.20.1440.120">
    <property type="entry name" value="Recombination protein O, C-terminal domain"/>
    <property type="match status" value="1"/>
</dbReference>
<dbReference type="HAMAP" id="MF_00201">
    <property type="entry name" value="RecO"/>
    <property type="match status" value="1"/>
</dbReference>
<dbReference type="InterPro" id="IPR037278">
    <property type="entry name" value="ARFGAP/RecO"/>
</dbReference>
<dbReference type="InterPro" id="IPR022572">
    <property type="entry name" value="DNA_rep/recomb_RecO_N"/>
</dbReference>
<dbReference type="InterPro" id="IPR012340">
    <property type="entry name" value="NA-bd_OB-fold"/>
</dbReference>
<dbReference type="InterPro" id="IPR003717">
    <property type="entry name" value="RecO"/>
</dbReference>
<dbReference type="InterPro" id="IPR042242">
    <property type="entry name" value="RecO_C"/>
</dbReference>
<dbReference type="NCBIfam" id="TIGR00613">
    <property type="entry name" value="reco"/>
    <property type="match status" value="1"/>
</dbReference>
<dbReference type="PANTHER" id="PTHR33991">
    <property type="entry name" value="DNA REPAIR PROTEIN RECO"/>
    <property type="match status" value="1"/>
</dbReference>
<dbReference type="PANTHER" id="PTHR33991:SF1">
    <property type="entry name" value="DNA REPAIR PROTEIN RECO"/>
    <property type="match status" value="1"/>
</dbReference>
<dbReference type="Pfam" id="PF02565">
    <property type="entry name" value="RecO_C"/>
    <property type="match status" value="1"/>
</dbReference>
<dbReference type="Pfam" id="PF11967">
    <property type="entry name" value="RecO_N"/>
    <property type="match status" value="1"/>
</dbReference>
<dbReference type="SUPFAM" id="SSF57863">
    <property type="entry name" value="ArfGap/RecO-like zinc finger"/>
    <property type="match status" value="1"/>
</dbReference>
<dbReference type="SUPFAM" id="SSF50249">
    <property type="entry name" value="Nucleic acid-binding proteins"/>
    <property type="match status" value="1"/>
</dbReference>
<protein>
    <recommendedName>
        <fullName evidence="1">DNA repair protein RecO</fullName>
    </recommendedName>
    <alternativeName>
        <fullName evidence="1">Recombination protein O</fullName>
    </alternativeName>
</protein>
<name>RECO_MYCSK</name>
<evidence type="ECO:0000255" key="1">
    <source>
        <dbReference type="HAMAP-Rule" id="MF_00201"/>
    </source>
</evidence>
<reference key="1">
    <citation type="submission" date="2006-12" db="EMBL/GenBank/DDBJ databases">
        <title>Complete sequence of chromosome of Mycobacterium sp. KMS.</title>
        <authorList>
            <consortium name="US DOE Joint Genome Institute"/>
            <person name="Copeland A."/>
            <person name="Lucas S."/>
            <person name="Lapidus A."/>
            <person name="Barry K."/>
            <person name="Detter J.C."/>
            <person name="Glavina del Rio T."/>
            <person name="Hammon N."/>
            <person name="Israni S."/>
            <person name="Dalin E."/>
            <person name="Tice H."/>
            <person name="Pitluck S."/>
            <person name="Kiss H."/>
            <person name="Brettin T."/>
            <person name="Bruce D."/>
            <person name="Han C."/>
            <person name="Tapia R."/>
            <person name="Gilna P."/>
            <person name="Schmutz J."/>
            <person name="Larimer F."/>
            <person name="Land M."/>
            <person name="Hauser L."/>
            <person name="Kyrpides N."/>
            <person name="Mikhailova N."/>
            <person name="Miller C.D."/>
            <person name="Richardson P."/>
        </authorList>
    </citation>
    <scope>NUCLEOTIDE SEQUENCE [LARGE SCALE GENOMIC DNA]</scope>
    <source>
        <strain>KMS</strain>
    </source>
</reference>
<sequence>MRLYRDRAVVLRQHKLGEADRIVTLLTRDHGLVRAVAKGVRRTRSKFGARLEPFAHIDVQLHPGRNLDIVTQVQAIDAFASDIVSDYGRYTSACAVLETAERLAGEERAPMPALHRLTVGALRAVADGSRPRELVLDAYLLRAMGIAGWAPALTECARCATPGPHRAFHVAAGGSVCVHCRPSGSVTPPQAVLDLMSALHDGDWPAAEASTPSHRSQASGLVAAHLQWHLERQLRTLPLVERVYRVDHAVADHRISLLRQDVHRGDEPGDQLAAGS</sequence>
<keyword id="KW-0227">DNA damage</keyword>
<keyword id="KW-0233">DNA recombination</keyword>
<keyword id="KW-0234">DNA repair</keyword>
<comment type="function">
    <text evidence="1">Involved in DNA repair and RecF pathway recombination.</text>
</comment>
<comment type="similarity">
    <text evidence="1">Belongs to the RecO family.</text>
</comment>
<organism>
    <name type="scientific">Mycobacterium sp. (strain KMS)</name>
    <dbReference type="NCBI Taxonomy" id="189918"/>
    <lineage>
        <taxon>Bacteria</taxon>
        <taxon>Bacillati</taxon>
        <taxon>Actinomycetota</taxon>
        <taxon>Actinomycetes</taxon>
        <taxon>Mycobacteriales</taxon>
        <taxon>Mycobacteriaceae</taxon>
        <taxon>Mycobacterium</taxon>
    </lineage>
</organism>
<proteinExistence type="inferred from homology"/>
<gene>
    <name evidence="1" type="primary">recO</name>
    <name type="ordered locus">Mkms_3513</name>
</gene>